<reference key="1">
    <citation type="journal article" date="2007" name="PLoS Genet.">
        <title>The complete genome sequence of Yersinia pseudotuberculosis IP31758, the causative agent of Far East scarlet-like fever.</title>
        <authorList>
            <person name="Eppinger M."/>
            <person name="Rosovitz M.J."/>
            <person name="Fricke W.F."/>
            <person name="Rasko D.A."/>
            <person name="Kokorina G."/>
            <person name="Fayolle C."/>
            <person name="Lindler L.E."/>
            <person name="Carniel E."/>
            <person name="Ravel J."/>
        </authorList>
    </citation>
    <scope>NUCLEOTIDE SEQUENCE [LARGE SCALE GENOMIC DNA]</scope>
    <source>
        <strain>IP 31758</strain>
    </source>
</reference>
<protein>
    <recommendedName>
        <fullName evidence="1">Large ribosomal subunit protein uL6</fullName>
    </recommendedName>
    <alternativeName>
        <fullName evidence="2">50S ribosomal protein L6</fullName>
    </alternativeName>
</protein>
<accession>A7FNL9</accession>
<name>RL6_YERP3</name>
<sequence length="177" mass="18927">MSRVAKAPVVIPAGVEVKLNGQVISIKGKNGELTRTVHSAVEVKQEENTLTFAPREGAVDGWAQAGTTRALLNSMVIGVTEGFTKKLQLVGVGYRAAVKGNVVNLALGFSHPVDHELPAGITAECPTQTEIVLKGADKQVIGQVAADLRAYRRPEPYKGKGVRYADEVVRTKEAKKK</sequence>
<organism>
    <name type="scientific">Yersinia pseudotuberculosis serotype O:1b (strain IP 31758)</name>
    <dbReference type="NCBI Taxonomy" id="349747"/>
    <lineage>
        <taxon>Bacteria</taxon>
        <taxon>Pseudomonadati</taxon>
        <taxon>Pseudomonadota</taxon>
        <taxon>Gammaproteobacteria</taxon>
        <taxon>Enterobacterales</taxon>
        <taxon>Yersiniaceae</taxon>
        <taxon>Yersinia</taxon>
    </lineage>
</organism>
<comment type="function">
    <text evidence="1">This protein binds to the 23S rRNA, and is important in its secondary structure. It is located near the subunit interface in the base of the L7/L12 stalk, and near the tRNA binding site of the peptidyltransferase center.</text>
</comment>
<comment type="subunit">
    <text evidence="1">Part of the 50S ribosomal subunit.</text>
</comment>
<comment type="similarity">
    <text evidence="1">Belongs to the universal ribosomal protein uL6 family.</text>
</comment>
<evidence type="ECO:0000255" key="1">
    <source>
        <dbReference type="HAMAP-Rule" id="MF_01365"/>
    </source>
</evidence>
<evidence type="ECO:0000305" key="2"/>
<dbReference type="EMBL" id="CP000720">
    <property type="protein sequence ID" value="ABS48996.1"/>
    <property type="molecule type" value="Genomic_DNA"/>
</dbReference>
<dbReference type="RefSeq" id="WP_002213334.1">
    <property type="nucleotide sequence ID" value="NC_009708.1"/>
</dbReference>
<dbReference type="SMR" id="A7FNL9"/>
<dbReference type="GeneID" id="96663181"/>
<dbReference type="KEGG" id="ypi:YpsIP31758_3899"/>
<dbReference type="HOGENOM" id="CLU_065464_1_2_6"/>
<dbReference type="Proteomes" id="UP000002412">
    <property type="component" value="Chromosome"/>
</dbReference>
<dbReference type="GO" id="GO:0022625">
    <property type="term" value="C:cytosolic large ribosomal subunit"/>
    <property type="evidence" value="ECO:0007669"/>
    <property type="project" value="TreeGrafter"/>
</dbReference>
<dbReference type="GO" id="GO:0019843">
    <property type="term" value="F:rRNA binding"/>
    <property type="evidence" value="ECO:0007669"/>
    <property type="project" value="UniProtKB-UniRule"/>
</dbReference>
<dbReference type="GO" id="GO:0003735">
    <property type="term" value="F:structural constituent of ribosome"/>
    <property type="evidence" value="ECO:0007669"/>
    <property type="project" value="InterPro"/>
</dbReference>
<dbReference type="GO" id="GO:0002181">
    <property type="term" value="P:cytoplasmic translation"/>
    <property type="evidence" value="ECO:0007669"/>
    <property type="project" value="TreeGrafter"/>
</dbReference>
<dbReference type="FunFam" id="3.90.930.12:FF:000001">
    <property type="entry name" value="50S ribosomal protein L6"/>
    <property type="match status" value="1"/>
</dbReference>
<dbReference type="FunFam" id="3.90.930.12:FF:000002">
    <property type="entry name" value="50S ribosomal protein L6"/>
    <property type="match status" value="1"/>
</dbReference>
<dbReference type="Gene3D" id="3.90.930.12">
    <property type="entry name" value="Ribosomal protein L6, alpha-beta domain"/>
    <property type="match status" value="2"/>
</dbReference>
<dbReference type="HAMAP" id="MF_01365_B">
    <property type="entry name" value="Ribosomal_uL6_B"/>
    <property type="match status" value="1"/>
</dbReference>
<dbReference type="InterPro" id="IPR000702">
    <property type="entry name" value="Ribosomal_uL6-like"/>
</dbReference>
<dbReference type="InterPro" id="IPR036789">
    <property type="entry name" value="Ribosomal_uL6-like_a/b-dom_sf"/>
</dbReference>
<dbReference type="InterPro" id="IPR020040">
    <property type="entry name" value="Ribosomal_uL6_a/b-dom"/>
</dbReference>
<dbReference type="InterPro" id="IPR019906">
    <property type="entry name" value="Ribosomal_uL6_bac-type"/>
</dbReference>
<dbReference type="InterPro" id="IPR002358">
    <property type="entry name" value="Ribosomal_uL6_CS"/>
</dbReference>
<dbReference type="NCBIfam" id="TIGR03654">
    <property type="entry name" value="L6_bact"/>
    <property type="match status" value="1"/>
</dbReference>
<dbReference type="PANTHER" id="PTHR11655">
    <property type="entry name" value="60S/50S RIBOSOMAL PROTEIN L6/L9"/>
    <property type="match status" value="1"/>
</dbReference>
<dbReference type="PANTHER" id="PTHR11655:SF14">
    <property type="entry name" value="LARGE RIBOSOMAL SUBUNIT PROTEIN UL6M"/>
    <property type="match status" value="1"/>
</dbReference>
<dbReference type="Pfam" id="PF00347">
    <property type="entry name" value="Ribosomal_L6"/>
    <property type="match status" value="2"/>
</dbReference>
<dbReference type="PIRSF" id="PIRSF002162">
    <property type="entry name" value="Ribosomal_L6"/>
    <property type="match status" value="1"/>
</dbReference>
<dbReference type="PRINTS" id="PR00059">
    <property type="entry name" value="RIBOSOMALL6"/>
</dbReference>
<dbReference type="SUPFAM" id="SSF56053">
    <property type="entry name" value="Ribosomal protein L6"/>
    <property type="match status" value="2"/>
</dbReference>
<dbReference type="PROSITE" id="PS00525">
    <property type="entry name" value="RIBOSOMAL_L6_1"/>
    <property type="match status" value="1"/>
</dbReference>
<keyword id="KW-0687">Ribonucleoprotein</keyword>
<keyword id="KW-0689">Ribosomal protein</keyword>
<keyword id="KW-0694">RNA-binding</keyword>
<keyword id="KW-0699">rRNA-binding</keyword>
<gene>
    <name evidence="1" type="primary">rplF</name>
    <name type="ordered locus">YpsIP31758_3899</name>
</gene>
<proteinExistence type="inferred from homology"/>
<feature type="chain" id="PRO_1000067985" description="Large ribosomal subunit protein uL6">
    <location>
        <begin position="1"/>
        <end position="177"/>
    </location>
</feature>